<accession>B4SXX8</accession>
<sequence length="265" mass="27408">MQPDLHCRTLAAHTLKHFRALSPLTHCMTNDVVQTFTANTLLALGASPAMVIDPVEARPFAAIANALLINVGTLTASRADAMRAAVESAYDAKTPWTLDPVAVGALEFRRRFCLDLLSLRPAAIRGNASEILALSGMALGGRGVDTTEAALAALPAAQALARQIDCIVVVTGEVDYVTNGQRTLSIPGGDPLMTRIVGTGCALSAVVAASCALPGAALDNVASACCWMKLAGQAAAERSEGPGSFIPAFLDALYHLDVEAANATN</sequence>
<feature type="chain" id="PRO_1000100423" description="Hydroxyethylthiazole kinase">
    <location>
        <begin position="1"/>
        <end position="265"/>
    </location>
</feature>
<feature type="binding site" evidence="1">
    <location>
        <position position="50"/>
    </location>
    <ligand>
        <name>substrate</name>
    </ligand>
</feature>
<feature type="binding site" evidence="1">
    <location>
        <position position="125"/>
    </location>
    <ligand>
        <name>ATP</name>
        <dbReference type="ChEBI" id="CHEBI:30616"/>
    </ligand>
</feature>
<feature type="binding site" evidence="1">
    <location>
        <position position="171"/>
    </location>
    <ligand>
        <name>ATP</name>
        <dbReference type="ChEBI" id="CHEBI:30616"/>
    </ligand>
</feature>
<feature type="binding site" evidence="1">
    <location>
        <position position="198"/>
    </location>
    <ligand>
        <name>substrate</name>
    </ligand>
</feature>
<evidence type="ECO:0000255" key="1">
    <source>
        <dbReference type="HAMAP-Rule" id="MF_00228"/>
    </source>
</evidence>
<gene>
    <name evidence="1" type="primary">thiM</name>
    <name type="ordered locus">SNSL254_A2334</name>
</gene>
<keyword id="KW-0067">ATP-binding</keyword>
<keyword id="KW-0418">Kinase</keyword>
<keyword id="KW-0460">Magnesium</keyword>
<keyword id="KW-0479">Metal-binding</keyword>
<keyword id="KW-0547">Nucleotide-binding</keyword>
<keyword id="KW-0784">Thiamine biosynthesis</keyword>
<keyword id="KW-0808">Transferase</keyword>
<proteinExistence type="inferred from homology"/>
<comment type="function">
    <text evidence="1">Catalyzes the phosphorylation of the hydroxyl group of 4-methyl-5-beta-hydroxyethylthiazole (THZ).</text>
</comment>
<comment type="catalytic activity">
    <reaction evidence="1">
        <text>5-(2-hydroxyethyl)-4-methylthiazole + ATP = 4-methyl-5-(2-phosphooxyethyl)-thiazole + ADP + H(+)</text>
        <dbReference type="Rhea" id="RHEA:24212"/>
        <dbReference type="ChEBI" id="CHEBI:15378"/>
        <dbReference type="ChEBI" id="CHEBI:17957"/>
        <dbReference type="ChEBI" id="CHEBI:30616"/>
        <dbReference type="ChEBI" id="CHEBI:58296"/>
        <dbReference type="ChEBI" id="CHEBI:456216"/>
        <dbReference type="EC" id="2.7.1.50"/>
    </reaction>
</comment>
<comment type="cofactor">
    <cofactor evidence="1">
        <name>Mg(2+)</name>
        <dbReference type="ChEBI" id="CHEBI:18420"/>
    </cofactor>
</comment>
<comment type="pathway">
    <text evidence="1">Cofactor biosynthesis; thiamine diphosphate biosynthesis; 4-methyl-5-(2-phosphoethyl)-thiazole from 5-(2-hydroxyethyl)-4-methylthiazole: step 1/1.</text>
</comment>
<comment type="similarity">
    <text evidence="1">Belongs to the Thz kinase family.</text>
</comment>
<organism>
    <name type="scientific">Salmonella newport (strain SL254)</name>
    <dbReference type="NCBI Taxonomy" id="423368"/>
    <lineage>
        <taxon>Bacteria</taxon>
        <taxon>Pseudomonadati</taxon>
        <taxon>Pseudomonadota</taxon>
        <taxon>Gammaproteobacteria</taxon>
        <taxon>Enterobacterales</taxon>
        <taxon>Enterobacteriaceae</taxon>
        <taxon>Salmonella</taxon>
    </lineage>
</organism>
<name>THIM_SALNS</name>
<reference key="1">
    <citation type="journal article" date="2011" name="J. Bacteriol.">
        <title>Comparative genomics of 28 Salmonella enterica isolates: evidence for CRISPR-mediated adaptive sublineage evolution.</title>
        <authorList>
            <person name="Fricke W.F."/>
            <person name="Mammel M.K."/>
            <person name="McDermott P.F."/>
            <person name="Tartera C."/>
            <person name="White D.G."/>
            <person name="Leclerc J.E."/>
            <person name="Ravel J."/>
            <person name="Cebula T.A."/>
        </authorList>
    </citation>
    <scope>NUCLEOTIDE SEQUENCE [LARGE SCALE GENOMIC DNA]</scope>
    <source>
        <strain>SL254</strain>
    </source>
</reference>
<protein>
    <recommendedName>
        <fullName evidence="1">Hydroxyethylthiazole kinase</fullName>
        <ecNumber evidence="1">2.7.1.50</ecNumber>
    </recommendedName>
    <alternativeName>
        <fullName evidence="1">4-methyl-5-beta-hydroxyethylthiazole kinase</fullName>
        <shortName evidence="1">TH kinase</shortName>
        <shortName evidence="1">Thz kinase</shortName>
    </alternativeName>
</protein>
<dbReference type="EC" id="2.7.1.50" evidence="1"/>
<dbReference type="EMBL" id="CP001113">
    <property type="protein sequence ID" value="ACF65539.1"/>
    <property type="molecule type" value="Genomic_DNA"/>
</dbReference>
<dbReference type="RefSeq" id="WP_001182158.1">
    <property type="nucleotide sequence ID" value="NZ_CCMR01000002.1"/>
</dbReference>
<dbReference type="SMR" id="B4SXX8"/>
<dbReference type="KEGG" id="see:SNSL254_A2334"/>
<dbReference type="HOGENOM" id="CLU_019943_0_1_6"/>
<dbReference type="UniPathway" id="UPA00060">
    <property type="reaction ID" value="UER00139"/>
</dbReference>
<dbReference type="Proteomes" id="UP000008824">
    <property type="component" value="Chromosome"/>
</dbReference>
<dbReference type="GO" id="GO:0005524">
    <property type="term" value="F:ATP binding"/>
    <property type="evidence" value="ECO:0007669"/>
    <property type="project" value="UniProtKB-UniRule"/>
</dbReference>
<dbReference type="GO" id="GO:0004417">
    <property type="term" value="F:hydroxyethylthiazole kinase activity"/>
    <property type="evidence" value="ECO:0007669"/>
    <property type="project" value="UniProtKB-UniRule"/>
</dbReference>
<dbReference type="GO" id="GO:0000287">
    <property type="term" value="F:magnesium ion binding"/>
    <property type="evidence" value="ECO:0007669"/>
    <property type="project" value="UniProtKB-UniRule"/>
</dbReference>
<dbReference type="GO" id="GO:0009228">
    <property type="term" value="P:thiamine biosynthetic process"/>
    <property type="evidence" value="ECO:0007669"/>
    <property type="project" value="UniProtKB-KW"/>
</dbReference>
<dbReference type="GO" id="GO:0009229">
    <property type="term" value="P:thiamine diphosphate biosynthetic process"/>
    <property type="evidence" value="ECO:0007669"/>
    <property type="project" value="UniProtKB-UniRule"/>
</dbReference>
<dbReference type="CDD" id="cd01170">
    <property type="entry name" value="THZ_kinase"/>
    <property type="match status" value="1"/>
</dbReference>
<dbReference type="FunFam" id="3.40.1190.20:FF:000015">
    <property type="entry name" value="Hydroxyethylthiazole kinase"/>
    <property type="match status" value="1"/>
</dbReference>
<dbReference type="Gene3D" id="3.40.1190.20">
    <property type="match status" value="1"/>
</dbReference>
<dbReference type="HAMAP" id="MF_00228">
    <property type="entry name" value="Thz_kinase"/>
    <property type="match status" value="1"/>
</dbReference>
<dbReference type="InterPro" id="IPR000417">
    <property type="entry name" value="Hyethyz_kinase"/>
</dbReference>
<dbReference type="InterPro" id="IPR029056">
    <property type="entry name" value="Ribokinase-like"/>
</dbReference>
<dbReference type="NCBIfam" id="NF006830">
    <property type="entry name" value="PRK09355.1"/>
    <property type="match status" value="1"/>
</dbReference>
<dbReference type="NCBIfam" id="TIGR00694">
    <property type="entry name" value="thiM"/>
    <property type="match status" value="1"/>
</dbReference>
<dbReference type="Pfam" id="PF02110">
    <property type="entry name" value="HK"/>
    <property type="match status" value="1"/>
</dbReference>
<dbReference type="PIRSF" id="PIRSF000513">
    <property type="entry name" value="Thz_kinase"/>
    <property type="match status" value="1"/>
</dbReference>
<dbReference type="PRINTS" id="PR01099">
    <property type="entry name" value="HYETHTZKNASE"/>
</dbReference>
<dbReference type="SUPFAM" id="SSF53613">
    <property type="entry name" value="Ribokinase-like"/>
    <property type="match status" value="1"/>
</dbReference>